<evidence type="ECO:0000255" key="1">
    <source>
        <dbReference type="HAMAP-Rule" id="MF_00012"/>
    </source>
</evidence>
<dbReference type="EC" id="4.2.1.9" evidence="1"/>
<dbReference type="EMBL" id="CP000383">
    <property type="protein sequence ID" value="ABG60978.1"/>
    <property type="molecule type" value="Genomic_DNA"/>
</dbReference>
<dbReference type="RefSeq" id="WP_011587083.1">
    <property type="nucleotide sequence ID" value="NC_008255.1"/>
</dbReference>
<dbReference type="SMR" id="Q11NN5"/>
<dbReference type="STRING" id="269798.CHU_3745"/>
<dbReference type="KEGG" id="chu:CHU_3745"/>
<dbReference type="eggNOG" id="COG0129">
    <property type="taxonomic scope" value="Bacteria"/>
</dbReference>
<dbReference type="HOGENOM" id="CLU_014271_4_2_10"/>
<dbReference type="OrthoDB" id="9807077at2"/>
<dbReference type="UniPathway" id="UPA00047">
    <property type="reaction ID" value="UER00057"/>
</dbReference>
<dbReference type="UniPathway" id="UPA00049">
    <property type="reaction ID" value="UER00061"/>
</dbReference>
<dbReference type="Proteomes" id="UP000001822">
    <property type="component" value="Chromosome"/>
</dbReference>
<dbReference type="GO" id="GO:0051537">
    <property type="term" value="F:2 iron, 2 sulfur cluster binding"/>
    <property type="evidence" value="ECO:0007669"/>
    <property type="project" value="UniProtKB-UniRule"/>
</dbReference>
<dbReference type="GO" id="GO:0004160">
    <property type="term" value="F:dihydroxy-acid dehydratase activity"/>
    <property type="evidence" value="ECO:0007669"/>
    <property type="project" value="UniProtKB-UniRule"/>
</dbReference>
<dbReference type="GO" id="GO:0000287">
    <property type="term" value="F:magnesium ion binding"/>
    <property type="evidence" value="ECO:0007669"/>
    <property type="project" value="UniProtKB-UniRule"/>
</dbReference>
<dbReference type="GO" id="GO:0009097">
    <property type="term" value="P:isoleucine biosynthetic process"/>
    <property type="evidence" value="ECO:0007669"/>
    <property type="project" value="UniProtKB-UniRule"/>
</dbReference>
<dbReference type="GO" id="GO:0009099">
    <property type="term" value="P:L-valine biosynthetic process"/>
    <property type="evidence" value="ECO:0007669"/>
    <property type="project" value="UniProtKB-UniRule"/>
</dbReference>
<dbReference type="FunFam" id="3.50.30.80:FF:000001">
    <property type="entry name" value="Dihydroxy-acid dehydratase"/>
    <property type="match status" value="1"/>
</dbReference>
<dbReference type="Gene3D" id="3.50.30.80">
    <property type="entry name" value="IlvD/EDD C-terminal domain-like"/>
    <property type="match status" value="1"/>
</dbReference>
<dbReference type="HAMAP" id="MF_00012">
    <property type="entry name" value="IlvD"/>
    <property type="match status" value="1"/>
</dbReference>
<dbReference type="InterPro" id="IPR050165">
    <property type="entry name" value="DHAD_IlvD/Edd"/>
</dbReference>
<dbReference type="InterPro" id="IPR042096">
    <property type="entry name" value="Dihydro-acid_dehy_C"/>
</dbReference>
<dbReference type="InterPro" id="IPR004404">
    <property type="entry name" value="DihydroxyA_deHydtase"/>
</dbReference>
<dbReference type="InterPro" id="IPR020558">
    <property type="entry name" value="DiOHA_6PGluconate_deHydtase_CS"/>
</dbReference>
<dbReference type="InterPro" id="IPR056740">
    <property type="entry name" value="ILV_EDD_C"/>
</dbReference>
<dbReference type="InterPro" id="IPR000581">
    <property type="entry name" value="ILV_EDD_N"/>
</dbReference>
<dbReference type="InterPro" id="IPR037237">
    <property type="entry name" value="IlvD/EDD_N"/>
</dbReference>
<dbReference type="NCBIfam" id="TIGR00110">
    <property type="entry name" value="ilvD"/>
    <property type="match status" value="1"/>
</dbReference>
<dbReference type="NCBIfam" id="NF002068">
    <property type="entry name" value="PRK00911.1"/>
    <property type="match status" value="1"/>
</dbReference>
<dbReference type="PANTHER" id="PTHR21000">
    <property type="entry name" value="DIHYDROXY-ACID DEHYDRATASE DAD"/>
    <property type="match status" value="1"/>
</dbReference>
<dbReference type="PANTHER" id="PTHR21000:SF5">
    <property type="entry name" value="DIHYDROXY-ACID DEHYDRATASE, MITOCHONDRIAL"/>
    <property type="match status" value="1"/>
</dbReference>
<dbReference type="Pfam" id="PF24877">
    <property type="entry name" value="ILV_EDD_C"/>
    <property type="match status" value="1"/>
</dbReference>
<dbReference type="Pfam" id="PF00920">
    <property type="entry name" value="ILVD_EDD_N"/>
    <property type="match status" value="1"/>
</dbReference>
<dbReference type="SUPFAM" id="SSF143975">
    <property type="entry name" value="IlvD/EDD N-terminal domain-like"/>
    <property type="match status" value="1"/>
</dbReference>
<dbReference type="SUPFAM" id="SSF52016">
    <property type="entry name" value="LeuD/IlvD-like"/>
    <property type="match status" value="1"/>
</dbReference>
<dbReference type="PROSITE" id="PS00886">
    <property type="entry name" value="ILVD_EDD_1"/>
    <property type="match status" value="1"/>
</dbReference>
<dbReference type="PROSITE" id="PS00887">
    <property type="entry name" value="ILVD_EDD_2"/>
    <property type="match status" value="1"/>
</dbReference>
<reference key="1">
    <citation type="journal article" date="2007" name="Appl. Environ. Microbiol.">
        <title>Genome sequence of the cellulolytic gliding bacterium Cytophaga hutchinsonii.</title>
        <authorList>
            <person name="Xie G."/>
            <person name="Bruce D.C."/>
            <person name="Challacombe J.F."/>
            <person name="Chertkov O."/>
            <person name="Detter J.C."/>
            <person name="Gilna P."/>
            <person name="Han C.S."/>
            <person name="Lucas S."/>
            <person name="Misra M."/>
            <person name="Myers G.L."/>
            <person name="Richardson P."/>
            <person name="Tapia R."/>
            <person name="Thayer N."/>
            <person name="Thompson L.S."/>
            <person name="Brettin T.S."/>
            <person name="Henrissat B."/>
            <person name="Wilson D.B."/>
            <person name="McBride M.J."/>
        </authorList>
    </citation>
    <scope>NUCLEOTIDE SEQUENCE [LARGE SCALE GENOMIC DNA]</scope>
    <source>
        <strain>ATCC 33406 / DSM 1761 / JCM 20678 / CIP 103989 / IAM 12607 / NBRC 15051 / NCIMB 9469 / D465</strain>
    </source>
</reference>
<organism>
    <name type="scientific">Cytophaga hutchinsonii (strain ATCC 33406 / DSM 1761 / CIP 103989 / NBRC 15051 / NCIMB 9469 / D465)</name>
    <dbReference type="NCBI Taxonomy" id="269798"/>
    <lineage>
        <taxon>Bacteria</taxon>
        <taxon>Pseudomonadati</taxon>
        <taxon>Bacteroidota</taxon>
        <taxon>Cytophagia</taxon>
        <taxon>Cytophagales</taxon>
        <taxon>Cytophagaceae</taxon>
        <taxon>Cytophaga</taxon>
    </lineage>
</organism>
<gene>
    <name evidence="1" type="primary">ilvD</name>
    <name type="ordered locus">CHU_3745</name>
</gene>
<protein>
    <recommendedName>
        <fullName evidence="1">Dihydroxy-acid dehydratase</fullName>
        <shortName evidence="1">DAD</shortName>
        <ecNumber evidence="1">4.2.1.9</ecNumber>
    </recommendedName>
</protein>
<feature type="chain" id="PRO_0000321595" description="Dihydroxy-acid dehydratase">
    <location>
        <begin position="1"/>
        <end position="562"/>
    </location>
</feature>
<feature type="active site" description="Proton acceptor" evidence="1">
    <location>
        <position position="477"/>
    </location>
</feature>
<feature type="binding site" evidence="1">
    <location>
        <position position="55"/>
    </location>
    <ligand>
        <name>[2Fe-2S] cluster</name>
        <dbReference type="ChEBI" id="CHEBI:190135"/>
    </ligand>
</feature>
<feature type="binding site" evidence="1">
    <location>
        <position position="87"/>
    </location>
    <ligand>
        <name>Mg(2+)</name>
        <dbReference type="ChEBI" id="CHEBI:18420"/>
    </ligand>
</feature>
<feature type="binding site" evidence="1">
    <location>
        <position position="128"/>
    </location>
    <ligand>
        <name>[2Fe-2S] cluster</name>
        <dbReference type="ChEBI" id="CHEBI:190135"/>
    </ligand>
</feature>
<feature type="binding site" evidence="1">
    <location>
        <position position="129"/>
    </location>
    <ligand>
        <name>Mg(2+)</name>
        <dbReference type="ChEBI" id="CHEBI:18420"/>
    </ligand>
</feature>
<feature type="binding site" description="via carbamate group" evidence="1">
    <location>
        <position position="130"/>
    </location>
    <ligand>
        <name>Mg(2+)</name>
        <dbReference type="ChEBI" id="CHEBI:18420"/>
    </ligand>
</feature>
<feature type="binding site" evidence="1">
    <location>
        <position position="200"/>
    </location>
    <ligand>
        <name>[2Fe-2S] cluster</name>
        <dbReference type="ChEBI" id="CHEBI:190135"/>
    </ligand>
</feature>
<feature type="binding site" evidence="1">
    <location>
        <position position="451"/>
    </location>
    <ligand>
        <name>Mg(2+)</name>
        <dbReference type="ChEBI" id="CHEBI:18420"/>
    </ligand>
</feature>
<feature type="modified residue" description="N6-carboxylysine" evidence="1">
    <location>
        <position position="130"/>
    </location>
</feature>
<sequence length="562" mass="59734">MIIVSTELNKISKRLTQDPSQPASQAMMYGAGFTDEDMKKPIVGIGSTGFDGNTCNMHLNILAGQVKGSITRGGMVGLGFNTIGVSDGISMGTEGMRFSLVSRDVIADSIETICEAHYYDALVTVVGCDKNMPGALIAMARLNRPSIMVYGGTIHSGHYKGEKLNIVSAFEALGKKVAGTITEEDYQGVIKNACPGAGACGGMYTANTMASAIEAMGLTLPYSSTAPATSEKKKAETLALGKAMMHLLEKDIKPRDIMTFEAFENAIRVILVLGGSTNAVMHLIAIAKAAGVKLTIDDFQRIGNTTPLLADLKPSGKYMMEDMDAIGGVPSVMRLLAKHNLLHLDCMTVTGKTVGENLKEAQDLPTDQDLMYAWENPIKQTGHLQILYGNLAPQGSVAKITGKEGTYFEGPARVYDSEEAVNKGLEANEVKSGEVIVIRYVGPKGGPGMPEMLKPTALLMGLGLGNECALITDGRFSGGTHGFVVGHITPEATEGGMIGLVKNGDIIRIDAVNRVLEVKISEEEVTKRRAAWVKPAPRATSGVLYKYMKLVSSASEGCVTDN</sequence>
<name>ILVD_CYTH3</name>
<keyword id="KW-0001">2Fe-2S</keyword>
<keyword id="KW-0028">Amino-acid biosynthesis</keyword>
<keyword id="KW-0100">Branched-chain amino acid biosynthesis</keyword>
<keyword id="KW-0408">Iron</keyword>
<keyword id="KW-0411">Iron-sulfur</keyword>
<keyword id="KW-0456">Lyase</keyword>
<keyword id="KW-0460">Magnesium</keyword>
<keyword id="KW-0479">Metal-binding</keyword>
<keyword id="KW-1185">Reference proteome</keyword>
<proteinExistence type="inferred from homology"/>
<accession>Q11NN5</accession>
<comment type="function">
    <text evidence="1">Functions in the biosynthesis of branched-chain amino acids. Catalyzes the dehydration of (2R,3R)-2,3-dihydroxy-3-methylpentanoate (2,3-dihydroxy-3-methylvalerate) into 2-oxo-3-methylpentanoate (2-oxo-3-methylvalerate) and of (2R)-2,3-dihydroxy-3-methylbutanoate (2,3-dihydroxyisovalerate) into 2-oxo-3-methylbutanoate (2-oxoisovalerate), the penultimate precursor to L-isoleucine and L-valine, respectively.</text>
</comment>
<comment type="catalytic activity">
    <reaction evidence="1">
        <text>(2R)-2,3-dihydroxy-3-methylbutanoate = 3-methyl-2-oxobutanoate + H2O</text>
        <dbReference type="Rhea" id="RHEA:24809"/>
        <dbReference type="ChEBI" id="CHEBI:11851"/>
        <dbReference type="ChEBI" id="CHEBI:15377"/>
        <dbReference type="ChEBI" id="CHEBI:49072"/>
        <dbReference type="EC" id="4.2.1.9"/>
    </reaction>
    <physiologicalReaction direction="left-to-right" evidence="1">
        <dbReference type="Rhea" id="RHEA:24810"/>
    </physiologicalReaction>
</comment>
<comment type="catalytic activity">
    <reaction evidence="1">
        <text>(2R,3R)-2,3-dihydroxy-3-methylpentanoate = (S)-3-methyl-2-oxopentanoate + H2O</text>
        <dbReference type="Rhea" id="RHEA:27694"/>
        <dbReference type="ChEBI" id="CHEBI:15377"/>
        <dbReference type="ChEBI" id="CHEBI:35146"/>
        <dbReference type="ChEBI" id="CHEBI:49258"/>
        <dbReference type="EC" id="4.2.1.9"/>
    </reaction>
    <physiologicalReaction direction="left-to-right" evidence="1">
        <dbReference type="Rhea" id="RHEA:27695"/>
    </physiologicalReaction>
</comment>
<comment type="cofactor">
    <cofactor evidence="1">
        <name>[2Fe-2S] cluster</name>
        <dbReference type="ChEBI" id="CHEBI:190135"/>
    </cofactor>
    <text evidence="1">Binds 1 [2Fe-2S] cluster per subunit. This cluster acts as a Lewis acid cofactor.</text>
</comment>
<comment type="cofactor">
    <cofactor evidence="1">
        <name>Mg(2+)</name>
        <dbReference type="ChEBI" id="CHEBI:18420"/>
    </cofactor>
</comment>
<comment type="pathway">
    <text evidence="1">Amino-acid biosynthesis; L-isoleucine biosynthesis; L-isoleucine from 2-oxobutanoate: step 3/4.</text>
</comment>
<comment type="pathway">
    <text evidence="1">Amino-acid biosynthesis; L-valine biosynthesis; L-valine from pyruvate: step 3/4.</text>
</comment>
<comment type="subunit">
    <text evidence="1">Homodimer.</text>
</comment>
<comment type="similarity">
    <text evidence="1">Belongs to the IlvD/Edd family.</text>
</comment>